<organism>
    <name type="scientific">Aliivibrio fischeri (strain MJ11)</name>
    <name type="common">Vibrio fischeri</name>
    <dbReference type="NCBI Taxonomy" id="388396"/>
    <lineage>
        <taxon>Bacteria</taxon>
        <taxon>Pseudomonadati</taxon>
        <taxon>Pseudomonadota</taxon>
        <taxon>Gammaproteobacteria</taxon>
        <taxon>Vibrionales</taxon>
        <taxon>Vibrionaceae</taxon>
        <taxon>Aliivibrio</taxon>
    </lineage>
</organism>
<name>RL16_ALIFM</name>
<dbReference type="EMBL" id="CP001139">
    <property type="protein sequence ID" value="ACH65110.1"/>
    <property type="molecule type" value="Genomic_DNA"/>
</dbReference>
<dbReference type="RefSeq" id="WP_005417237.1">
    <property type="nucleotide sequence ID" value="NC_011184.1"/>
</dbReference>
<dbReference type="SMR" id="B5FG16"/>
<dbReference type="GeneID" id="56276448"/>
<dbReference type="KEGG" id="vfm:VFMJ11_0232"/>
<dbReference type="HOGENOM" id="CLU_078858_2_1_6"/>
<dbReference type="Proteomes" id="UP000001857">
    <property type="component" value="Chromosome I"/>
</dbReference>
<dbReference type="GO" id="GO:0022625">
    <property type="term" value="C:cytosolic large ribosomal subunit"/>
    <property type="evidence" value="ECO:0007669"/>
    <property type="project" value="TreeGrafter"/>
</dbReference>
<dbReference type="GO" id="GO:0019843">
    <property type="term" value="F:rRNA binding"/>
    <property type="evidence" value="ECO:0007669"/>
    <property type="project" value="UniProtKB-UniRule"/>
</dbReference>
<dbReference type="GO" id="GO:0003735">
    <property type="term" value="F:structural constituent of ribosome"/>
    <property type="evidence" value="ECO:0007669"/>
    <property type="project" value="InterPro"/>
</dbReference>
<dbReference type="GO" id="GO:0000049">
    <property type="term" value="F:tRNA binding"/>
    <property type="evidence" value="ECO:0007669"/>
    <property type="project" value="UniProtKB-KW"/>
</dbReference>
<dbReference type="GO" id="GO:0006412">
    <property type="term" value="P:translation"/>
    <property type="evidence" value="ECO:0007669"/>
    <property type="project" value="UniProtKB-UniRule"/>
</dbReference>
<dbReference type="CDD" id="cd01433">
    <property type="entry name" value="Ribosomal_L16_L10e"/>
    <property type="match status" value="1"/>
</dbReference>
<dbReference type="FunFam" id="3.90.1170.10:FF:000001">
    <property type="entry name" value="50S ribosomal protein L16"/>
    <property type="match status" value="1"/>
</dbReference>
<dbReference type="Gene3D" id="3.90.1170.10">
    <property type="entry name" value="Ribosomal protein L10e/L16"/>
    <property type="match status" value="1"/>
</dbReference>
<dbReference type="HAMAP" id="MF_01342">
    <property type="entry name" value="Ribosomal_uL16"/>
    <property type="match status" value="1"/>
</dbReference>
<dbReference type="InterPro" id="IPR047873">
    <property type="entry name" value="Ribosomal_uL16"/>
</dbReference>
<dbReference type="InterPro" id="IPR000114">
    <property type="entry name" value="Ribosomal_uL16_bact-type"/>
</dbReference>
<dbReference type="InterPro" id="IPR020798">
    <property type="entry name" value="Ribosomal_uL16_CS"/>
</dbReference>
<dbReference type="InterPro" id="IPR016180">
    <property type="entry name" value="Ribosomal_uL16_dom"/>
</dbReference>
<dbReference type="InterPro" id="IPR036920">
    <property type="entry name" value="Ribosomal_uL16_sf"/>
</dbReference>
<dbReference type="NCBIfam" id="TIGR01164">
    <property type="entry name" value="rplP_bact"/>
    <property type="match status" value="1"/>
</dbReference>
<dbReference type="PANTHER" id="PTHR12220">
    <property type="entry name" value="50S/60S RIBOSOMAL PROTEIN L16"/>
    <property type="match status" value="1"/>
</dbReference>
<dbReference type="PANTHER" id="PTHR12220:SF13">
    <property type="entry name" value="LARGE RIBOSOMAL SUBUNIT PROTEIN UL16M"/>
    <property type="match status" value="1"/>
</dbReference>
<dbReference type="Pfam" id="PF00252">
    <property type="entry name" value="Ribosomal_L16"/>
    <property type="match status" value="1"/>
</dbReference>
<dbReference type="PRINTS" id="PR00060">
    <property type="entry name" value="RIBOSOMALL16"/>
</dbReference>
<dbReference type="SUPFAM" id="SSF54686">
    <property type="entry name" value="Ribosomal protein L16p/L10e"/>
    <property type="match status" value="1"/>
</dbReference>
<dbReference type="PROSITE" id="PS00586">
    <property type="entry name" value="RIBOSOMAL_L16_1"/>
    <property type="match status" value="1"/>
</dbReference>
<sequence length="136" mass="15565">MLQPKRTKFRKVMTGRNRGLAKGTEVSFGDFGLKAVGRGRLTARQIEAARRAMTRHIKRQGQIWIRVFPDKPITEKPLEVRQGKGKGNVEYWVAQIQPGKVMYEMNGVPEELAREAFRLAARKLPIKTTFVTKQVM</sequence>
<protein>
    <recommendedName>
        <fullName evidence="1">Large ribosomal subunit protein uL16</fullName>
    </recommendedName>
    <alternativeName>
        <fullName evidence="2">50S ribosomal protein L16</fullName>
    </alternativeName>
</protein>
<evidence type="ECO:0000255" key="1">
    <source>
        <dbReference type="HAMAP-Rule" id="MF_01342"/>
    </source>
</evidence>
<evidence type="ECO:0000305" key="2"/>
<comment type="function">
    <text evidence="1">Binds 23S rRNA and is also seen to make contacts with the A and possibly P site tRNAs.</text>
</comment>
<comment type="subunit">
    <text evidence="1">Part of the 50S ribosomal subunit.</text>
</comment>
<comment type="similarity">
    <text evidence="1">Belongs to the universal ribosomal protein uL16 family.</text>
</comment>
<feature type="chain" id="PRO_1000143048" description="Large ribosomal subunit protein uL16">
    <location>
        <begin position="1"/>
        <end position="136"/>
    </location>
</feature>
<keyword id="KW-0687">Ribonucleoprotein</keyword>
<keyword id="KW-0689">Ribosomal protein</keyword>
<keyword id="KW-0694">RNA-binding</keyword>
<keyword id="KW-0699">rRNA-binding</keyword>
<keyword id="KW-0820">tRNA-binding</keyword>
<gene>
    <name evidence="1" type="primary">rplP</name>
    <name type="ordered locus">VFMJ11_0232</name>
</gene>
<accession>B5FG16</accession>
<reference key="1">
    <citation type="submission" date="2008-08" db="EMBL/GenBank/DDBJ databases">
        <title>Complete sequence of Vibrio fischeri strain MJ11.</title>
        <authorList>
            <person name="Mandel M.J."/>
            <person name="Stabb E.V."/>
            <person name="Ruby E.G."/>
            <person name="Ferriera S."/>
            <person name="Johnson J."/>
            <person name="Kravitz S."/>
            <person name="Beeson K."/>
            <person name="Sutton G."/>
            <person name="Rogers Y.-H."/>
            <person name="Friedman R."/>
            <person name="Frazier M."/>
            <person name="Venter J.C."/>
        </authorList>
    </citation>
    <scope>NUCLEOTIDE SEQUENCE [LARGE SCALE GENOMIC DNA]</scope>
    <source>
        <strain>MJ11</strain>
    </source>
</reference>
<proteinExistence type="inferred from homology"/>